<name>TOLB_ANASK</name>
<protein>
    <recommendedName>
        <fullName evidence="1">Tol-Pal system protein TolB</fullName>
    </recommendedName>
</protein>
<feature type="signal peptide" evidence="1">
    <location>
        <begin position="1"/>
        <end position="21"/>
    </location>
</feature>
<feature type="chain" id="PRO_5000390379" description="Tol-Pal system protein TolB" evidence="1">
    <location>
        <begin position="22"/>
        <end position="434"/>
    </location>
</feature>
<feature type="region of interest" description="Disordered" evidence="2">
    <location>
        <begin position="411"/>
        <end position="434"/>
    </location>
</feature>
<keyword id="KW-0131">Cell cycle</keyword>
<keyword id="KW-0132">Cell division</keyword>
<keyword id="KW-0574">Periplasm</keyword>
<keyword id="KW-0732">Signal</keyword>
<dbReference type="EMBL" id="CP001131">
    <property type="protein sequence ID" value="ACG71932.1"/>
    <property type="molecule type" value="Genomic_DNA"/>
</dbReference>
<dbReference type="RefSeq" id="WP_012524762.1">
    <property type="nucleotide sequence ID" value="NC_011145.1"/>
</dbReference>
<dbReference type="SMR" id="B4UDE1"/>
<dbReference type="KEGG" id="ank:AnaeK_0693"/>
<dbReference type="HOGENOM" id="CLU_047123_2_0_7"/>
<dbReference type="OrthoDB" id="9815657at2"/>
<dbReference type="Proteomes" id="UP000001871">
    <property type="component" value="Chromosome"/>
</dbReference>
<dbReference type="GO" id="GO:0042597">
    <property type="term" value="C:periplasmic space"/>
    <property type="evidence" value="ECO:0007669"/>
    <property type="project" value="UniProtKB-SubCell"/>
</dbReference>
<dbReference type="GO" id="GO:0051301">
    <property type="term" value="P:cell division"/>
    <property type="evidence" value="ECO:0007669"/>
    <property type="project" value="UniProtKB-KW"/>
</dbReference>
<dbReference type="GO" id="GO:0017038">
    <property type="term" value="P:protein import"/>
    <property type="evidence" value="ECO:0007669"/>
    <property type="project" value="InterPro"/>
</dbReference>
<dbReference type="Gene3D" id="2.120.10.30">
    <property type="entry name" value="TolB, C-terminal domain"/>
    <property type="match status" value="1"/>
</dbReference>
<dbReference type="Gene3D" id="3.40.50.10070">
    <property type="entry name" value="TolB, N-terminal domain"/>
    <property type="match status" value="1"/>
</dbReference>
<dbReference type="HAMAP" id="MF_00671">
    <property type="entry name" value="TolB"/>
    <property type="match status" value="1"/>
</dbReference>
<dbReference type="InterPro" id="IPR011042">
    <property type="entry name" value="6-blade_b-propeller_TolB-like"/>
</dbReference>
<dbReference type="InterPro" id="IPR011659">
    <property type="entry name" value="PD40"/>
</dbReference>
<dbReference type="InterPro" id="IPR014167">
    <property type="entry name" value="Tol-Pal_TolB"/>
</dbReference>
<dbReference type="InterPro" id="IPR007195">
    <property type="entry name" value="TolB_N"/>
</dbReference>
<dbReference type="PANTHER" id="PTHR36842:SF1">
    <property type="entry name" value="PROTEIN TOLB"/>
    <property type="match status" value="1"/>
</dbReference>
<dbReference type="PANTHER" id="PTHR36842">
    <property type="entry name" value="PROTEIN TOLB HOMOLOG"/>
    <property type="match status" value="1"/>
</dbReference>
<dbReference type="Pfam" id="PF07676">
    <property type="entry name" value="PD40"/>
    <property type="match status" value="4"/>
</dbReference>
<dbReference type="Pfam" id="PF04052">
    <property type="entry name" value="TolB_N"/>
    <property type="match status" value="1"/>
</dbReference>
<dbReference type="SUPFAM" id="SSF52964">
    <property type="entry name" value="TolB, N-terminal domain"/>
    <property type="match status" value="1"/>
</dbReference>
<dbReference type="SUPFAM" id="SSF69304">
    <property type="entry name" value="Tricorn protease N-terminal domain"/>
    <property type="match status" value="1"/>
</dbReference>
<evidence type="ECO:0000255" key="1">
    <source>
        <dbReference type="HAMAP-Rule" id="MF_00671"/>
    </source>
</evidence>
<evidence type="ECO:0000256" key="2">
    <source>
        <dbReference type="SAM" id="MobiDB-lite"/>
    </source>
</evidence>
<reference key="1">
    <citation type="submission" date="2008-08" db="EMBL/GenBank/DDBJ databases">
        <title>Complete sequence of Anaeromyxobacter sp. K.</title>
        <authorList>
            <consortium name="US DOE Joint Genome Institute"/>
            <person name="Lucas S."/>
            <person name="Copeland A."/>
            <person name="Lapidus A."/>
            <person name="Glavina del Rio T."/>
            <person name="Dalin E."/>
            <person name="Tice H."/>
            <person name="Bruce D."/>
            <person name="Goodwin L."/>
            <person name="Pitluck S."/>
            <person name="Saunders E."/>
            <person name="Brettin T."/>
            <person name="Detter J.C."/>
            <person name="Han C."/>
            <person name="Larimer F."/>
            <person name="Land M."/>
            <person name="Hauser L."/>
            <person name="Kyrpides N."/>
            <person name="Ovchinnikiva G."/>
            <person name="Beliaev A."/>
        </authorList>
    </citation>
    <scope>NUCLEOTIDE SEQUENCE [LARGE SCALE GENOMIC DNA]</scope>
    <source>
        <strain>K</strain>
    </source>
</reference>
<gene>
    <name evidence="1" type="primary">tolB</name>
    <name type="ordered locus">AnaeK_0693</name>
</gene>
<comment type="function">
    <text evidence="1">Part of the Tol-Pal system, which plays a role in outer membrane invagination during cell division and is important for maintaining outer membrane integrity.</text>
</comment>
<comment type="subunit">
    <text evidence="1">The Tol-Pal system is composed of five core proteins: the inner membrane proteins TolA, TolQ and TolR, the periplasmic protein TolB and the outer membrane protein Pal. They form a network linking the inner and outer membranes and the peptidoglycan layer.</text>
</comment>
<comment type="subcellular location">
    <subcellularLocation>
        <location evidence="1">Periplasm</location>
    </subcellularLocation>
</comment>
<comment type="similarity">
    <text evidence="1">Belongs to the TolB family.</text>
</comment>
<accession>B4UDE1</accession>
<proteinExistence type="inferred from homology"/>
<organism>
    <name type="scientific">Anaeromyxobacter sp. (strain K)</name>
    <dbReference type="NCBI Taxonomy" id="447217"/>
    <lineage>
        <taxon>Bacteria</taxon>
        <taxon>Pseudomonadati</taxon>
        <taxon>Myxococcota</taxon>
        <taxon>Myxococcia</taxon>
        <taxon>Myxococcales</taxon>
        <taxon>Cystobacterineae</taxon>
        <taxon>Anaeromyxobacteraceae</taxon>
        <taxon>Anaeromyxobacter</taxon>
    </lineage>
</organism>
<sequence>MIVRRALALAALALAASPALAAQERPTIVVGSPDFRPLPIAVAAFQGEGDAGVAATQTAEVVRADLVLSGLFDVLDPRGFLADPSEGFAAPSIRFARWADVGADGLAKARVRRGPAGLEGELHLYEVRAGREVLVKLLRVDGADARSLAHRMADEIVRYYTREPGIFATRIAAIRRGRGTWELVTQDMDGGNQQVLLSERSILMSPAWRPDGREILVTSYRSGRPELWAYRFSDRAFRPLGRHRNAFGGVYSPDGSRIAFTVSEGNVTDLWVMSADGVGARKLTSDPAIDVSPTWSPDGRRIAFVSDRSGTPQIYVMGADGSGARRLTFQGNYNQTPQWSPRGDLIAFTARDERKVFDVFVVSPDSGAINRITQDQGRTNEEPSWAPNGRLMIFRTDRNGGIQLVVSDARGDRQTPVTSGKTDLAAPAWGPLAP</sequence>